<organism>
    <name type="scientific">Mycobacterium ulcerans (strain Agy99)</name>
    <dbReference type="NCBI Taxonomy" id="362242"/>
    <lineage>
        <taxon>Bacteria</taxon>
        <taxon>Bacillati</taxon>
        <taxon>Actinomycetota</taxon>
        <taxon>Actinomycetes</taxon>
        <taxon>Mycobacteriales</taxon>
        <taxon>Mycobacteriaceae</taxon>
        <taxon>Mycobacterium</taxon>
        <taxon>Mycobacterium ulcerans group</taxon>
    </lineage>
</organism>
<feature type="chain" id="PRO_1000044986" description="1,4-alpha-glucan branching enzyme GlgB">
    <location>
        <begin position="1"/>
        <end position="731"/>
    </location>
</feature>
<feature type="active site" description="Nucleophile" evidence="1">
    <location>
        <position position="411"/>
    </location>
</feature>
<feature type="active site" description="Proton donor" evidence="1">
    <location>
        <position position="464"/>
    </location>
</feature>
<proteinExistence type="inferred from homology"/>
<sequence length="731" mass="81531">MSRTDQLAGTHLAPEPNDLALLVAGSHHNPHGVLGAHEYGDHIVIRAFRPHAAEVIAIVGDDRFPMQHIESGLFAVALPFVDLIDYRLQVSYENSEPFTVADAYRFLPTLGEVDLHLFAEGRHERLWEALGAHPRSFTTADGVVHGVSFAVWAPNAEGVSLIGDFNGWSGSEAPMRVLGSSGVWELFWPDFPADGLYKFRVHGADGVVSERADPFAFGTEVPPQTASRVTVSDYSWGDGDWMTERAQRNPVFEPMSTYEVHLGSWRPGLSYRQLATELTDYVVAHKFTHVELLPVAEHPFAGSWGYQVTSYYAPTSRFGTPDDFRALVDALHQAGIGVIVDWVPAHFPKDAWALGRFDGTPLYEHSDPKRGEQLDWGTYVFDFGRPEVRNFLVANALYWIEQFHIDGLRVDAVASMLYLDYSRPQDGWTPNIYEGRENLEAVQFLQEMNATAHKAAPGIVTIAEESTSWPGVTRPTSIGGLGFSMKWNMGWMHDTLDYVSRDPIYRSYHHHEMTFSMLYAFSENYVLPLSHDEVVHGKGTLWGRMPGSNHTKAAGLRSLLAYQWAHPGKQLLFMGQEFGQRAEWSEQRGLDWFQLDENGFSNGVLRLVRDINEIYCDHCALWSQDTTPEGYSWIDANDSANNVLSFLRHGSDGSVMACIFNFAGSEHSDYRLGLPIAGRWREVLNTDATIYNGSGVGNFGGVDATAEPWHGRPASAVLVLPPSSALWLEPA</sequence>
<gene>
    <name evidence="1" type="primary">glgB</name>
    <name type="ordered locus">MUL_3936</name>
</gene>
<accession>A0PUI6</accession>
<evidence type="ECO:0000255" key="1">
    <source>
        <dbReference type="HAMAP-Rule" id="MF_00685"/>
    </source>
</evidence>
<protein>
    <recommendedName>
        <fullName evidence="1">1,4-alpha-glucan branching enzyme GlgB</fullName>
        <ecNumber evidence="1">2.4.1.18</ecNumber>
    </recommendedName>
    <alternativeName>
        <fullName evidence="1">1,4-alpha-D-glucan:1,4-alpha-D-glucan 6-glucosyl-transferase</fullName>
    </alternativeName>
    <alternativeName>
        <fullName evidence="1">Alpha-(1-&gt;4)-glucan branching enzyme</fullName>
    </alternativeName>
    <alternativeName>
        <fullName evidence="1">Glycogen branching enzyme</fullName>
        <shortName evidence="1">BE</shortName>
    </alternativeName>
</protein>
<reference key="1">
    <citation type="journal article" date="2007" name="Genome Res.">
        <title>Reductive evolution and niche adaptation inferred from the genome of Mycobacterium ulcerans, the causative agent of Buruli ulcer.</title>
        <authorList>
            <person name="Stinear T.P."/>
            <person name="Seemann T."/>
            <person name="Pidot S."/>
            <person name="Frigui W."/>
            <person name="Reysset G."/>
            <person name="Garnier T."/>
            <person name="Meurice G."/>
            <person name="Simon D."/>
            <person name="Bouchier C."/>
            <person name="Ma L."/>
            <person name="Tichit M."/>
            <person name="Porter J.L."/>
            <person name="Ryan J."/>
            <person name="Johnson P.D.R."/>
            <person name="Davies J.K."/>
            <person name="Jenkin G.A."/>
            <person name="Small P.L.C."/>
            <person name="Jones L.M."/>
            <person name="Tekaia F."/>
            <person name="Laval F."/>
            <person name="Daffe M."/>
            <person name="Parkhill J."/>
            <person name="Cole S.T."/>
        </authorList>
    </citation>
    <scope>NUCLEOTIDE SEQUENCE [LARGE SCALE GENOMIC DNA]</scope>
    <source>
        <strain>Agy99</strain>
    </source>
</reference>
<name>GLGB_MYCUA</name>
<comment type="function">
    <text evidence="1">Catalyzes the formation of the alpha-1,6-glucosidic linkages in glycogen by scission of a 1,4-alpha-linked oligosaccharide from growing alpha-1,4-glucan chains and the subsequent attachment of the oligosaccharide to the alpha-1,6 position.</text>
</comment>
<comment type="catalytic activity">
    <reaction evidence="1">
        <text>Transfers a segment of a (1-&gt;4)-alpha-D-glucan chain to a primary hydroxy group in a similar glucan chain.</text>
        <dbReference type="EC" id="2.4.1.18"/>
    </reaction>
</comment>
<comment type="pathway">
    <text evidence="1">Glycan biosynthesis; glycogen biosynthesis.</text>
</comment>
<comment type="subunit">
    <text evidence="1">Monomer.</text>
</comment>
<comment type="similarity">
    <text evidence="1">Belongs to the glycosyl hydrolase 13 family. GlgB subfamily.</text>
</comment>
<dbReference type="EC" id="2.4.1.18" evidence="1"/>
<dbReference type="EMBL" id="CP000325">
    <property type="protein sequence ID" value="ABL06005.1"/>
    <property type="molecule type" value="Genomic_DNA"/>
</dbReference>
<dbReference type="RefSeq" id="WP_011741610.1">
    <property type="nucleotide sequence ID" value="NC_008611.1"/>
</dbReference>
<dbReference type="SMR" id="A0PUI6"/>
<dbReference type="CAZy" id="CBM48">
    <property type="family name" value="Carbohydrate-Binding Module Family 48"/>
</dbReference>
<dbReference type="CAZy" id="GH13">
    <property type="family name" value="Glycoside Hydrolase Family 13"/>
</dbReference>
<dbReference type="KEGG" id="mul:MUL_3936"/>
<dbReference type="eggNOG" id="COG0296">
    <property type="taxonomic scope" value="Bacteria"/>
</dbReference>
<dbReference type="HOGENOM" id="CLU_004245_3_2_11"/>
<dbReference type="UniPathway" id="UPA00164"/>
<dbReference type="Proteomes" id="UP000000765">
    <property type="component" value="Chromosome"/>
</dbReference>
<dbReference type="GO" id="GO:0005829">
    <property type="term" value="C:cytosol"/>
    <property type="evidence" value="ECO:0007669"/>
    <property type="project" value="TreeGrafter"/>
</dbReference>
<dbReference type="GO" id="GO:0003844">
    <property type="term" value="F:1,4-alpha-glucan branching enzyme activity"/>
    <property type="evidence" value="ECO:0007669"/>
    <property type="project" value="UniProtKB-UniRule"/>
</dbReference>
<dbReference type="GO" id="GO:0043169">
    <property type="term" value="F:cation binding"/>
    <property type="evidence" value="ECO:0007669"/>
    <property type="project" value="InterPro"/>
</dbReference>
<dbReference type="GO" id="GO:0004553">
    <property type="term" value="F:hydrolase activity, hydrolyzing O-glycosyl compounds"/>
    <property type="evidence" value="ECO:0007669"/>
    <property type="project" value="InterPro"/>
</dbReference>
<dbReference type="GO" id="GO:0005978">
    <property type="term" value="P:glycogen biosynthetic process"/>
    <property type="evidence" value="ECO:0007669"/>
    <property type="project" value="UniProtKB-UniRule"/>
</dbReference>
<dbReference type="CDD" id="cd11322">
    <property type="entry name" value="AmyAc_Glg_BE"/>
    <property type="match status" value="1"/>
</dbReference>
<dbReference type="CDD" id="cd02855">
    <property type="entry name" value="E_set_GBE_prok_N"/>
    <property type="match status" value="1"/>
</dbReference>
<dbReference type="FunFam" id="2.60.40.10:FF:000169">
    <property type="entry name" value="1,4-alpha-glucan branching enzyme GlgB"/>
    <property type="match status" value="1"/>
</dbReference>
<dbReference type="FunFam" id="2.60.40.10:FF:002204">
    <property type="entry name" value="1,4-alpha-glucan branching enzyme GlgB"/>
    <property type="match status" value="1"/>
</dbReference>
<dbReference type="FunFam" id="2.60.40.1180:FF:000002">
    <property type="entry name" value="1,4-alpha-glucan branching enzyme GlgB"/>
    <property type="match status" value="1"/>
</dbReference>
<dbReference type="FunFam" id="3.20.20.80:FF:000003">
    <property type="entry name" value="1,4-alpha-glucan branching enzyme GlgB"/>
    <property type="match status" value="1"/>
</dbReference>
<dbReference type="Gene3D" id="3.20.20.80">
    <property type="entry name" value="Glycosidases"/>
    <property type="match status" value="1"/>
</dbReference>
<dbReference type="Gene3D" id="2.60.40.1180">
    <property type="entry name" value="Golgi alpha-mannosidase II"/>
    <property type="match status" value="1"/>
</dbReference>
<dbReference type="Gene3D" id="2.60.40.10">
    <property type="entry name" value="Immunoglobulins"/>
    <property type="match status" value="2"/>
</dbReference>
<dbReference type="HAMAP" id="MF_00685">
    <property type="entry name" value="GlgB"/>
    <property type="match status" value="1"/>
</dbReference>
<dbReference type="InterPro" id="IPR006048">
    <property type="entry name" value="A-amylase/branching_C"/>
</dbReference>
<dbReference type="InterPro" id="IPR037439">
    <property type="entry name" value="Branching_enzy"/>
</dbReference>
<dbReference type="InterPro" id="IPR006407">
    <property type="entry name" value="GlgB"/>
</dbReference>
<dbReference type="InterPro" id="IPR054169">
    <property type="entry name" value="GlgB_N"/>
</dbReference>
<dbReference type="InterPro" id="IPR044143">
    <property type="entry name" value="GlgB_N_E_set_prok"/>
</dbReference>
<dbReference type="InterPro" id="IPR006047">
    <property type="entry name" value="Glyco_hydro_13_cat_dom"/>
</dbReference>
<dbReference type="InterPro" id="IPR004193">
    <property type="entry name" value="Glyco_hydro_13_N"/>
</dbReference>
<dbReference type="InterPro" id="IPR013780">
    <property type="entry name" value="Glyco_hydro_b"/>
</dbReference>
<dbReference type="InterPro" id="IPR017853">
    <property type="entry name" value="Glycoside_hydrolase_SF"/>
</dbReference>
<dbReference type="InterPro" id="IPR013783">
    <property type="entry name" value="Ig-like_fold"/>
</dbReference>
<dbReference type="InterPro" id="IPR014756">
    <property type="entry name" value="Ig_E-set"/>
</dbReference>
<dbReference type="NCBIfam" id="TIGR01515">
    <property type="entry name" value="branching_enzym"/>
    <property type="match status" value="1"/>
</dbReference>
<dbReference type="NCBIfam" id="NF003811">
    <property type="entry name" value="PRK05402.1"/>
    <property type="match status" value="1"/>
</dbReference>
<dbReference type="NCBIfam" id="NF008967">
    <property type="entry name" value="PRK12313.1"/>
    <property type="match status" value="1"/>
</dbReference>
<dbReference type="PANTHER" id="PTHR43651">
    <property type="entry name" value="1,4-ALPHA-GLUCAN-BRANCHING ENZYME"/>
    <property type="match status" value="1"/>
</dbReference>
<dbReference type="PANTHER" id="PTHR43651:SF3">
    <property type="entry name" value="1,4-ALPHA-GLUCAN-BRANCHING ENZYME"/>
    <property type="match status" value="1"/>
</dbReference>
<dbReference type="Pfam" id="PF00128">
    <property type="entry name" value="Alpha-amylase"/>
    <property type="match status" value="2"/>
</dbReference>
<dbReference type="Pfam" id="PF02806">
    <property type="entry name" value="Alpha-amylase_C"/>
    <property type="match status" value="1"/>
</dbReference>
<dbReference type="Pfam" id="PF02922">
    <property type="entry name" value="CBM_48"/>
    <property type="match status" value="1"/>
</dbReference>
<dbReference type="Pfam" id="PF22019">
    <property type="entry name" value="GlgB_N"/>
    <property type="match status" value="1"/>
</dbReference>
<dbReference type="PIRSF" id="PIRSF000463">
    <property type="entry name" value="GlgB"/>
    <property type="match status" value="1"/>
</dbReference>
<dbReference type="SMART" id="SM00642">
    <property type="entry name" value="Aamy"/>
    <property type="match status" value="1"/>
</dbReference>
<dbReference type="SUPFAM" id="SSF51445">
    <property type="entry name" value="(Trans)glycosidases"/>
    <property type="match status" value="1"/>
</dbReference>
<dbReference type="SUPFAM" id="SSF81296">
    <property type="entry name" value="E set domains"/>
    <property type="match status" value="2"/>
</dbReference>
<dbReference type="SUPFAM" id="SSF51011">
    <property type="entry name" value="Glycosyl hydrolase domain"/>
    <property type="match status" value="1"/>
</dbReference>
<keyword id="KW-0119">Carbohydrate metabolism</keyword>
<keyword id="KW-0320">Glycogen biosynthesis</keyword>
<keyword id="KW-0321">Glycogen metabolism</keyword>
<keyword id="KW-0328">Glycosyltransferase</keyword>
<keyword id="KW-0808">Transferase</keyword>